<comment type="function">
    <text evidence="1">Poorly processive, error-prone DNA polymerase involved in untargeted mutagenesis. Copies undamaged DNA at stalled replication forks, which arise in vivo from mismatched or misaligned primer ends. These misaligned primers can be extended by PolIV. Exhibits no 3'-5' exonuclease (proofreading) activity. May be involved in translesional synthesis, in conjunction with the beta clamp from PolIII.</text>
</comment>
<comment type="catalytic activity">
    <reaction evidence="1">
        <text>DNA(n) + a 2'-deoxyribonucleoside 5'-triphosphate = DNA(n+1) + diphosphate</text>
        <dbReference type="Rhea" id="RHEA:22508"/>
        <dbReference type="Rhea" id="RHEA-COMP:17339"/>
        <dbReference type="Rhea" id="RHEA-COMP:17340"/>
        <dbReference type="ChEBI" id="CHEBI:33019"/>
        <dbReference type="ChEBI" id="CHEBI:61560"/>
        <dbReference type="ChEBI" id="CHEBI:173112"/>
        <dbReference type="EC" id="2.7.7.7"/>
    </reaction>
</comment>
<comment type="cofactor">
    <cofactor evidence="1">
        <name>Mg(2+)</name>
        <dbReference type="ChEBI" id="CHEBI:18420"/>
    </cofactor>
    <text evidence="1">Binds 2 magnesium ions per subunit.</text>
</comment>
<comment type="subunit">
    <text evidence="1">Monomer.</text>
</comment>
<comment type="subcellular location">
    <subcellularLocation>
        <location evidence="1">Cytoplasm</location>
    </subcellularLocation>
</comment>
<comment type="similarity">
    <text evidence="1">Belongs to the DNA polymerase type-Y family.</text>
</comment>
<evidence type="ECO:0000255" key="1">
    <source>
        <dbReference type="HAMAP-Rule" id="MF_01113"/>
    </source>
</evidence>
<name>DPO4_SHESM</name>
<reference key="1">
    <citation type="submission" date="2006-08" db="EMBL/GenBank/DDBJ databases">
        <title>Complete sequence of Shewanella sp. MR-4.</title>
        <authorList>
            <consortium name="US DOE Joint Genome Institute"/>
            <person name="Copeland A."/>
            <person name="Lucas S."/>
            <person name="Lapidus A."/>
            <person name="Barry K."/>
            <person name="Detter J.C."/>
            <person name="Glavina del Rio T."/>
            <person name="Hammon N."/>
            <person name="Israni S."/>
            <person name="Dalin E."/>
            <person name="Tice H."/>
            <person name="Pitluck S."/>
            <person name="Kiss H."/>
            <person name="Brettin T."/>
            <person name="Bruce D."/>
            <person name="Han C."/>
            <person name="Tapia R."/>
            <person name="Gilna P."/>
            <person name="Schmutz J."/>
            <person name="Larimer F."/>
            <person name="Land M."/>
            <person name="Hauser L."/>
            <person name="Kyrpides N."/>
            <person name="Mikhailova N."/>
            <person name="Nealson K."/>
            <person name="Konstantinidis K."/>
            <person name="Klappenbach J."/>
            <person name="Tiedje J."/>
            <person name="Richardson P."/>
        </authorList>
    </citation>
    <scope>NUCLEOTIDE SEQUENCE [LARGE SCALE GENOMIC DNA]</scope>
    <source>
        <strain>MR-4</strain>
    </source>
</reference>
<protein>
    <recommendedName>
        <fullName evidence="1">DNA polymerase IV</fullName>
        <shortName evidence="1">Pol IV</shortName>
        <ecNumber evidence="1">2.7.7.7</ecNumber>
    </recommendedName>
</protein>
<dbReference type="EC" id="2.7.7.7" evidence="1"/>
<dbReference type="EMBL" id="CP000446">
    <property type="protein sequence ID" value="ABI38027.1"/>
    <property type="molecule type" value="Genomic_DNA"/>
</dbReference>
<dbReference type="RefSeq" id="WP_011621739.1">
    <property type="nucleotide sequence ID" value="NC_008321.1"/>
</dbReference>
<dbReference type="SMR" id="Q0HLP0"/>
<dbReference type="KEGG" id="she:Shewmr4_0947"/>
<dbReference type="HOGENOM" id="CLU_012348_1_2_6"/>
<dbReference type="GO" id="GO:0005829">
    <property type="term" value="C:cytosol"/>
    <property type="evidence" value="ECO:0007669"/>
    <property type="project" value="TreeGrafter"/>
</dbReference>
<dbReference type="GO" id="GO:0003684">
    <property type="term" value="F:damaged DNA binding"/>
    <property type="evidence" value="ECO:0007669"/>
    <property type="project" value="InterPro"/>
</dbReference>
<dbReference type="GO" id="GO:0003887">
    <property type="term" value="F:DNA-directed DNA polymerase activity"/>
    <property type="evidence" value="ECO:0007669"/>
    <property type="project" value="UniProtKB-UniRule"/>
</dbReference>
<dbReference type="GO" id="GO:0000287">
    <property type="term" value="F:magnesium ion binding"/>
    <property type="evidence" value="ECO:0007669"/>
    <property type="project" value="UniProtKB-UniRule"/>
</dbReference>
<dbReference type="GO" id="GO:0006261">
    <property type="term" value="P:DNA-templated DNA replication"/>
    <property type="evidence" value="ECO:0007669"/>
    <property type="project" value="UniProtKB-UniRule"/>
</dbReference>
<dbReference type="GO" id="GO:0042276">
    <property type="term" value="P:error-prone translesion synthesis"/>
    <property type="evidence" value="ECO:0007669"/>
    <property type="project" value="TreeGrafter"/>
</dbReference>
<dbReference type="GO" id="GO:0009432">
    <property type="term" value="P:SOS response"/>
    <property type="evidence" value="ECO:0007669"/>
    <property type="project" value="TreeGrafter"/>
</dbReference>
<dbReference type="CDD" id="cd03586">
    <property type="entry name" value="PolY_Pol_IV_kappa"/>
    <property type="match status" value="1"/>
</dbReference>
<dbReference type="FunFam" id="1.10.150.20:FF:000019">
    <property type="entry name" value="DNA polymerase IV"/>
    <property type="match status" value="1"/>
</dbReference>
<dbReference type="FunFam" id="3.30.70.270:FF:000002">
    <property type="entry name" value="DNA polymerase IV"/>
    <property type="match status" value="1"/>
</dbReference>
<dbReference type="FunFam" id="3.40.1170.60:FF:000001">
    <property type="entry name" value="DNA polymerase IV"/>
    <property type="match status" value="1"/>
</dbReference>
<dbReference type="Gene3D" id="3.30.70.270">
    <property type="match status" value="1"/>
</dbReference>
<dbReference type="Gene3D" id="3.40.1170.60">
    <property type="match status" value="1"/>
</dbReference>
<dbReference type="Gene3D" id="1.10.150.20">
    <property type="entry name" value="5' to 3' exonuclease, C-terminal subdomain"/>
    <property type="match status" value="1"/>
</dbReference>
<dbReference type="Gene3D" id="3.30.1490.100">
    <property type="entry name" value="DNA polymerase, Y-family, little finger domain"/>
    <property type="match status" value="1"/>
</dbReference>
<dbReference type="HAMAP" id="MF_01113">
    <property type="entry name" value="DNApol_IV"/>
    <property type="match status" value="1"/>
</dbReference>
<dbReference type="InterPro" id="IPR043502">
    <property type="entry name" value="DNA/RNA_pol_sf"/>
</dbReference>
<dbReference type="InterPro" id="IPR036775">
    <property type="entry name" value="DNA_pol_Y-fam_lit_finger_sf"/>
</dbReference>
<dbReference type="InterPro" id="IPR017961">
    <property type="entry name" value="DNA_pol_Y-fam_little_finger"/>
</dbReference>
<dbReference type="InterPro" id="IPR050116">
    <property type="entry name" value="DNA_polymerase-Y"/>
</dbReference>
<dbReference type="InterPro" id="IPR022880">
    <property type="entry name" value="DNApol_IV"/>
</dbReference>
<dbReference type="InterPro" id="IPR053848">
    <property type="entry name" value="IMS_HHH_1"/>
</dbReference>
<dbReference type="InterPro" id="IPR043128">
    <property type="entry name" value="Rev_trsase/Diguanyl_cyclase"/>
</dbReference>
<dbReference type="InterPro" id="IPR001126">
    <property type="entry name" value="UmuC"/>
</dbReference>
<dbReference type="NCBIfam" id="NF002677">
    <property type="entry name" value="PRK02406.1"/>
    <property type="match status" value="1"/>
</dbReference>
<dbReference type="PANTHER" id="PTHR11076:SF33">
    <property type="entry name" value="DNA POLYMERASE KAPPA"/>
    <property type="match status" value="1"/>
</dbReference>
<dbReference type="PANTHER" id="PTHR11076">
    <property type="entry name" value="DNA REPAIR POLYMERASE UMUC / TRANSFERASE FAMILY MEMBER"/>
    <property type="match status" value="1"/>
</dbReference>
<dbReference type="Pfam" id="PF00817">
    <property type="entry name" value="IMS"/>
    <property type="match status" value="1"/>
</dbReference>
<dbReference type="Pfam" id="PF11799">
    <property type="entry name" value="IMS_C"/>
    <property type="match status" value="1"/>
</dbReference>
<dbReference type="Pfam" id="PF21999">
    <property type="entry name" value="IMS_HHH_1"/>
    <property type="match status" value="1"/>
</dbReference>
<dbReference type="SUPFAM" id="SSF56672">
    <property type="entry name" value="DNA/RNA polymerases"/>
    <property type="match status" value="1"/>
</dbReference>
<dbReference type="SUPFAM" id="SSF100879">
    <property type="entry name" value="Lesion bypass DNA polymerase (Y-family), little finger domain"/>
    <property type="match status" value="1"/>
</dbReference>
<dbReference type="PROSITE" id="PS50173">
    <property type="entry name" value="UMUC"/>
    <property type="match status" value="1"/>
</dbReference>
<feature type="chain" id="PRO_1000084937" description="DNA polymerase IV">
    <location>
        <begin position="1"/>
        <end position="359"/>
    </location>
</feature>
<feature type="domain" description="UmuC" evidence="1">
    <location>
        <begin position="4"/>
        <end position="185"/>
    </location>
</feature>
<feature type="active site" evidence="1">
    <location>
        <position position="104"/>
    </location>
</feature>
<feature type="binding site" evidence="1">
    <location>
        <position position="8"/>
    </location>
    <ligand>
        <name>Mg(2+)</name>
        <dbReference type="ChEBI" id="CHEBI:18420"/>
    </ligand>
</feature>
<feature type="binding site" evidence="1">
    <location>
        <position position="103"/>
    </location>
    <ligand>
        <name>Mg(2+)</name>
        <dbReference type="ChEBI" id="CHEBI:18420"/>
    </ligand>
</feature>
<feature type="site" description="Substrate discrimination" evidence="1">
    <location>
        <position position="13"/>
    </location>
</feature>
<gene>
    <name evidence="1" type="primary">dinB</name>
    <name type="ordered locus">Shewmr4_0947</name>
</gene>
<proteinExistence type="inferred from homology"/>
<keyword id="KW-0963">Cytoplasm</keyword>
<keyword id="KW-0227">DNA damage</keyword>
<keyword id="KW-0234">DNA repair</keyword>
<keyword id="KW-0235">DNA replication</keyword>
<keyword id="KW-0238">DNA-binding</keyword>
<keyword id="KW-0239">DNA-directed DNA polymerase</keyword>
<keyword id="KW-0460">Magnesium</keyword>
<keyword id="KW-0479">Metal-binding</keyword>
<keyword id="KW-0515">Mutator protein</keyword>
<keyword id="KW-0548">Nucleotidyltransferase</keyword>
<keyword id="KW-0808">Transferase</keyword>
<accession>Q0HLP0</accession>
<organism>
    <name type="scientific">Shewanella sp. (strain MR-4)</name>
    <dbReference type="NCBI Taxonomy" id="60480"/>
    <lineage>
        <taxon>Bacteria</taxon>
        <taxon>Pseudomonadati</taxon>
        <taxon>Pseudomonadota</taxon>
        <taxon>Gammaproteobacteria</taxon>
        <taxon>Alteromonadales</taxon>
        <taxon>Shewanellaceae</taxon>
        <taxon>Shewanella</taxon>
    </lineage>
</organism>
<sequence length="359" mass="39835">MRKIIHIDMDCYFAAVEMRDFPEYRGKPLAVGGSRVQRGVISTCNYEARKFGVRSAMATGYALKLCPNLILVPGRMQVYKEVSQQIRAIFSRYTELIEPLSLDEAYLDVSDCKLFKGSATLIAEAIRRDILAETGLTASAGVAPIKFLAKVASDLNKPNGQCVIPPDEVPEFVKSLSLRKIPGVGKVTAEKLSSLGLNTCADVQAYPKQELIARFGKFGAVLVERAHGIDERGISVSRERKSVGVETTLAQDIYTLEQCQQVMPGLIQELSSRLVRSAKGRQIHKQVVKLKFNDFKQTTIEHRSDEVSVVMFYELLSQAMARQEGRGIRLLGVSVGLAETKDTLSPLMVRETKQLDFVF</sequence>